<feature type="chain" id="PRO_0000353062" description="Sensor protein kinase WalK">
    <location>
        <begin position="1"/>
        <end position="608"/>
    </location>
</feature>
<feature type="transmembrane region" description="Helical" evidence="4">
    <location>
        <begin position="14"/>
        <end position="34"/>
    </location>
</feature>
<feature type="transmembrane region" description="Helical" evidence="4">
    <location>
        <begin position="183"/>
        <end position="203"/>
    </location>
</feature>
<feature type="domain" description="HAMP" evidence="5">
    <location>
        <begin position="204"/>
        <end position="256"/>
    </location>
</feature>
<feature type="domain" description="PAS" evidence="7">
    <location>
        <begin position="261"/>
        <end position="331"/>
    </location>
</feature>
<feature type="domain" description="PAC" evidence="8">
    <location>
        <begin position="314"/>
        <end position="378"/>
    </location>
</feature>
<feature type="domain" description="Histidine kinase" evidence="6">
    <location>
        <begin position="382"/>
        <end position="600"/>
    </location>
</feature>
<feature type="binding site" evidence="3">
    <location>
        <position position="271"/>
    </location>
    <ligand>
        <name>Zn(2+)</name>
        <dbReference type="ChEBI" id="CHEBI:29105"/>
    </ligand>
</feature>
<feature type="binding site" evidence="3">
    <location>
        <position position="274"/>
    </location>
    <ligand>
        <name>Zn(2+)</name>
        <dbReference type="ChEBI" id="CHEBI:29105"/>
    </ligand>
</feature>
<feature type="binding site" evidence="3">
    <location>
        <position position="364"/>
    </location>
    <ligand>
        <name>Zn(2+)</name>
        <dbReference type="ChEBI" id="CHEBI:29105"/>
    </ligand>
</feature>
<feature type="binding site" evidence="3">
    <location>
        <position position="368"/>
    </location>
    <ligand>
        <name>Zn(2+)</name>
        <dbReference type="ChEBI" id="CHEBI:29105"/>
    </ligand>
</feature>
<feature type="modified residue" description="Phosphohistidine; by autocatalysis" evidence="6">
    <location>
        <position position="385"/>
    </location>
</feature>
<comment type="function">
    <text evidence="3">Member of the two-component regulatory system WalK/WalR that regulates genes involved in cell wall metabolism, virulence regulation, biofilm production, oxidative stress resistance and antibiotic resistance via direct or indirect regulation of autolysins. Functions as a sensor protein kinase which is autophosphorylated at a histidine residue in the dimerization domain and transfers its phosphate group to the conserved aspartic acid residue in the regulatory domain of WalR. In turn, WalR binds to the upstream promoter regions of the target genes to positively and negatively regulate their expression.</text>
</comment>
<comment type="catalytic activity">
    <reaction evidence="3">
        <text>ATP + protein L-histidine = ADP + protein N-phospho-L-histidine.</text>
        <dbReference type="EC" id="2.7.13.3"/>
    </reaction>
</comment>
<comment type="activity regulation">
    <text evidence="3">By zinc. Zinc-binding negatively regulates WalK kinase activity and thus autophosphorylation.</text>
</comment>
<comment type="subunit">
    <text evidence="2">Forms homodimers. Forms homooligomers.</text>
</comment>
<comment type="subcellular location">
    <subcellularLocation>
        <location evidence="9">Cell membrane</location>
        <topology evidence="4">Multi-pass membrane protein</topology>
    </subcellularLocation>
</comment>
<comment type="PTM">
    <text evidence="3">Autophosphorylated.</text>
</comment>
<sequence length="608" mass="69958">MKWLKQLQSLHTKLVIVYVLLIIIGMQIIGLYFTNNLEKELLDNFKKNITQYAKQLEISIEKVYDEKGSVNAQKDIQNLLSEYANRQEIGEIRFIDKDQIIIATTKQSNRSLINQKANDSSVQKALSLGQSNDHLILKDYGGGKDRVWVYNIPVKVDKKVIGNIYIESKINDVYNQLNNINQIFIVGTAISLLITVILGFFIARTITKPITDMRNQTVEMSRGNYTQRVKIYGNDEIGELALAFNNLSKRVQEAQANTESEKRRLDSVITHMSDGIIATDRRGRIRIVNDMALKMFGMAKEDIIGYYMLSVLSLEDEFKLEEIQENNDSFLLDLNEEEGLIARVNFSTIVQETGFVTGYIAVLHDVTEQQQVERERREFVANVSHELRTPLTSMNSYIEALEEGAWKDEELAPQFLSVTREETERMIRLVNDLLQLSKMDNESDQINKEIIDFNMFINKIINRHEMSAKDTTFIRDIPKKTIFTEFDPDKMTQVFDNVITNAMKYSRGDKRVEFHVKQNPLYNRMTIRIKDNGIGIPINKVDKIFDRFYRVDKARTRKMGGTGLGLAISKEIVEAHNGRIWANSVEGQGTSIFITLPCEVIEDGDWDE</sequence>
<dbReference type="EC" id="2.7.13.3" evidence="1"/>
<dbReference type="EMBL" id="AP009351">
    <property type="protein sequence ID" value="BAF66290.1"/>
    <property type="molecule type" value="Genomic_DNA"/>
</dbReference>
<dbReference type="RefSeq" id="WP_000871602.1">
    <property type="nucleotide sequence ID" value="NZ_JBBIAE010000007.1"/>
</dbReference>
<dbReference type="SMR" id="A6QD58"/>
<dbReference type="KEGG" id="sae:NWMN_0018"/>
<dbReference type="HOGENOM" id="CLU_000445_89_2_9"/>
<dbReference type="EvolutionaryTrace" id="A6QD58"/>
<dbReference type="Proteomes" id="UP000006386">
    <property type="component" value="Chromosome"/>
</dbReference>
<dbReference type="GO" id="GO:0005886">
    <property type="term" value="C:plasma membrane"/>
    <property type="evidence" value="ECO:0007669"/>
    <property type="project" value="UniProtKB-SubCell"/>
</dbReference>
<dbReference type="GO" id="GO:0005524">
    <property type="term" value="F:ATP binding"/>
    <property type="evidence" value="ECO:0007669"/>
    <property type="project" value="UniProtKB-KW"/>
</dbReference>
<dbReference type="GO" id="GO:0046872">
    <property type="term" value="F:metal ion binding"/>
    <property type="evidence" value="ECO:0007669"/>
    <property type="project" value="UniProtKB-KW"/>
</dbReference>
<dbReference type="GO" id="GO:0000156">
    <property type="term" value="F:phosphorelay response regulator activity"/>
    <property type="evidence" value="ECO:0007669"/>
    <property type="project" value="TreeGrafter"/>
</dbReference>
<dbReference type="GO" id="GO:0000155">
    <property type="term" value="F:phosphorelay sensor kinase activity"/>
    <property type="evidence" value="ECO:0007669"/>
    <property type="project" value="InterPro"/>
</dbReference>
<dbReference type="GO" id="GO:0030295">
    <property type="term" value="F:protein kinase activator activity"/>
    <property type="evidence" value="ECO:0007669"/>
    <property type="project" value="TreeGrafter"/>
</dbReference>
<dbReference type="GO" id="GO:0007234">
    <property type="term" value="P:osmosensory signaling via phosphorelay pathway"/>
    <property type="evidence" value="ECO:0007669"/>
    <property type="project" value="TreeGrafter"/>
</dbReference>
<dbReference type="CDD" id="cd06225">
    <property type="entry name" value="HAMP"/>
    <property type="match status" value="1"/>
</dbReference>
<dbReference type="CDD" id="cd00075">
    <property type="entry name" value="HATPase"/>
    <property type="match status" value="1"/>
</dbReference>
<dbReference type="CDD" id="cd00082">
    <property type="entry name" value="HisKA"/>
    <property type="match status" value="1"/>
</dbReference>
<dbReference type="CDD" id="cd00130">
    <property type="entry name" value="PAS"/>
    <property type="match status" value="1"/>
</dbReference>
<dbReference type="FunFam" id="1.10.8.500:FF:000001">
    <property type="entry name" value="Cell wall metabolism sensor histidine kinase"/>
    <property type="match status" value="1"/>
</dbReference>
<dbReference type="FunFam" id="3.30.450.20:FF:000037">
    <property type="entry name" value="Cell wall metabolism sensor histidine kinase"/>
    <property type="match status" value="1"/>
</dbReference>
<dbReference type="FunFam" id="3.30.565.10:FF:000006">
    <property type="entry name" value="Sensor histidine kinase WalK"/>
    <property type="match status" value="1"/>
</dbReference>
<dbReference type="FunFam" id="1.10.287.130:FF:000001">
    <property type="entry name" value="Two-component sensor histidine kinase"/>
    <property type="match status" value="1"/>
</dbReference>
<dbReference type="Gene3D" id="1.10.287.130">
    <property type="match status" value="1"/>
</dbReference>
<dbReference type="Gene3D" id="1.10.8.500">
    <property type="entry name" value="HAMP domain in histidine kinase"/>
    <property type="match status" value="1"/>
</dbReference>
<dbReference type="Gene3D" id="3.30.565.10">
    <property type="entry name" value="Histidine kinase-like ATPase, C-terminal domain"/>
    <property type="match status" value="1"/>
</dbReference>
<dbReference type="Gene3D" id="3.30.450.20">
    <property type="entry name" value="PAS domain"/>
    <property type="match status" value="2"/>
</dbReference>
<dbReference type="InterPro" id="IPR003660">
    <property type="entry name" value="HAMP_dom"/>
</dbReference>
<dbReference type="InterPro" id="IPR036890">
    <property type="entry name" value="HATPase_C_sf"/>
</dbReference>
<dbReference type="InterPro" id="IPR005467">
    <property type="entry name" value="His_kinase_dom"/>
</dbReference>
<dbReference type="InterPro" id="IPR003661">
    <property type="entry name" value="HisK_dim/P_dom"/>
</dbReference>
<dbReference type="InterPro" id="IPR036097">
    <property type="entry name" value="HisK_dim/P_sf"/>
</dbReference>
<dbReference type="InterPro" id="IPR052545">
    <property type="entry name" value="Light-responsive_reg"/>
</dbReference>
<dbReference type="InterPro" id="IPR000014">
    <property type="entry name" value="PAS"/>
</dbReference>
<dbReference type="InterPro" id="IPR000700">
    <property type="entry name" value="PAS-assoc_C"/>
</dbReference>
<dbReference type="InterPro" id="IPR035965">
    <property type="entry name" value="PAS-like_dom_sf"/>
</dbReference>
<dbReference type="InterPro" id="IPR049814">
    <property type="entry name" value="Resp_reg_WalK"/>
</dbReference>
<dbReference type="InterPro" id="IPR029151">
    <property type="entry name" value="Sensor-like_sf"/>
</dbReference>
<dbReference type="InterPro" id="IPR004358">
    <property type="entry name" value="Sig_transdc_His_kin-like_C"/>
</dbReference>
<dbReference type="NCBIfam" id="NF033092">
    <property type="entry name" value="HK_WalK"/>
    <property type="match status" value="1"/>
</dbReference>
<dbReference type="NCBIfam" id="TIGR00229">
    <property type="entry name" value="sensory_box"/>
    <property type="match status" value="1"/>
</dbReference>
<dbReference type="PANTHER" id="PTHR42878:SF7">
    <property type="entry name" value="SENSOR HISTIDINE KINASE GLRK"/>
    <property type="match status" value="1"/>
</dbReference>
<dbReference type="PANTHER" id="PTHR42878">
    <property type="entry name" value="TWO-COMPONENT HISTIDINE KINASE"/>
    <property type="match status" value="1"/>
</dbReference>
<dbReference type="Pfam" id="PF23846">
    <property type="entry name" value="Cache_WalK"/>
    <property type="match status" value="1"/>
</dbReference>
<dbReference type="Pfam" id="PF00672">
    <property type="entry name" value="HAMP"/>
    <property type="match status" value="1"/>
</dbReference>
<dbReference type="Pfam" id="PF02518">
    <property type="entry name" value="HATPase_c"/>
    <property type="match status" value="1"/>
</dbReference>
<dbReference type="Pfam" id="PF00512">
    <property type="entry name" value="HisKA"/>
    <property type="match status" value="1"/>
</dbReference>
<dbReference type="Pfam" id="PF13426">
    <property type="entry name" value="PAS_9"/>
    <property type="match status" value="1"/>
</dbReference>
<dbReference type="PRINTS" id="PR00344">
    <property type="entry name" value="BCTRLSENSOR"/>
</dbReference>
<dbReference type="SMART" id="SM00304">
    <property type="entry name" value="HAMP"/>
    <property type="match status" value="1"/>
</dbReference>
<dbReference type="SMART" id="SM00387">
    <property type="entry name" value="HATPase_c"/>
    <property type="match status" value="1"/>
</dbReference>
<dbReference type="SMART" id="SM00388">
    <property type="entry name" value="HisKA"/>
    <property type="match status" value="1"/>
</dbReference>
<dbReference type="SMART" id="SM00091">
    <property type="entry name" value="PAS"/>
    <property type="match status" value="1"/>
</dbReference>
<dbReference type="SUPFAM" id="SSF55874">
    <property type="entry name" value="ATPase domain of HSP90 chaperone/DNA topoisomerase II/histidine kinase"/>
    <property type="match status" value="1"/>
</dbReference>
<dbReference type="SUPFAM" id="SSF158472">
    <property type="entry name" value="HAMP domain-like"/>
    <property type="match status" value="1"/>
</dbReference>
<dbReference type="SUPFAM" id="SSF47384">
    <property type="entry name" value="Homodimeric domain of signal transducing histidine kinase"/>
    <property type="match status" value="1"/>
</dbReference>
<dbReference type="SUPFAM" id="SSF55785">
    <property type="entry name" value="PYP-like sensor domain (PAS domain)"/>
    <property type="match status" value="1"/>
</dbReference>
<dbReference type="SUPFAM" id="SSF103190">
    <property type="entry name" value="Sensory domain-like"/>
    <property type="match status" value="1"/>
</dbReference>
<dbReference type="PROSITE" id="PS50885">
    <property type="entry name" value="HAMP"/>
    <property type="match status" value="1"/>
</dbReference>
<dbReference type="PROSITE" id="PS50109">
    <property type="entry name" value="HIS_KIN"/>
    <property type="match status" value="1"/>
</dbReference>
<dbReference type="PROSITE" id="PS50113">
    <property type="entry name" value="PAC"/>
    <property type="match status" value="1"/>
</dbReference>
<dbReference type="PROSITE" id="PS50112">
    <property type="entry name" value="PAS"/>
    <property type="match status" value="1"/>
</dbReference>
<organism>
    <name type="scientific">Staphylococcus aureus (strain Newman)</name>
    <dbReference type="NCBI Taxonomy" id="426430"/>
    <lineage>
        <taxon>Bacteria</taxon>
        <taxon>Bacillati</taxon>
        <taxon>Bacillota</taxon>
        <taxon>Bacilli</taxon>
        <taxon>Bacillales</taxon>
        <taxon>Staphylococcaceae</taxon>
        <taxon>Staphylococcus</taxon>
    </lineage>
</organism>
<keyword id="KW-0067">ATP-binding</keyword>
<keyword id="KW-1003">Cell membrane</keyword>
<keyword id="KW-0418">Kinase</keyword>
<keyword id="KW-0472">Membrane</keyword>
<keyword id="KW-0479">Metal-binding</keyword>
<keyword id="KW-0547">Nucleotide-binding</keyword>
<keyword id="KW-0597">Phosphoprotein</keyword>
<keyword id="KW-0808">Transferase</keyword>
<keyword id="KW-0812">Transmembrane</keyword>
<keyword id="KW-1133">Transmembrane helix</keyword>
<keyword id="KW-0902">Two-component regulatory system</keyword>
<keyword id="KW-0862">Zinc</keyword>
<reference key="1">
    <citation type="journal article" date="2008" name="J. Bacteriol.">
        <title>Genome sequence of Staphylococcus aureus strain Newman and comparative analysis of staphylococcal genomes: polymorphism and evolution of two major pathogenicity islands.</title>
        <authorList>
            <person name="Baba T."/>
            <person name="Bae T."/>
            <person name="Schneewind O."/>
            <person name="Takeuchi F."/>
            <person name="Hiramatsu K."/>
        </authorList>
    </citation>
    <scope>NUCLEOTIDE SEQUENCE [LARGE SCALE GENOMIC DNA]</scope>
    <source>
        <strain>Newman</strain>
    </source>
</reference>
<gene>
    <name type="primary">walK</name>
    <name type="synonym">vicK</name>
    <name type="ordered locus">NWMN_0018</name>
</gene>
<name>WALK_STAAE</name>
<proteinExistence type="inferred from homology"/>
<protein>
    <recommendedName>
        <fullName evidence="9">Sensor protein kinase WalK</fullName>
        <ecNumber evidence="1">2.7.13.3</ecNumber>
    </recommendedName>
</protein>
<evidence type="ECO:0000250" key="1">
    <source>
        <dbReference type="UniProtKB" id="O34206"/>
    </source>
</evidence>
<evidence type="ECO:0000250" key="2">
    <source>
        <dbReference type="UniProtKB" id="Q2G2U4"/>
    </source>
</evidence>
<evidence type="ECO:0000250" key="3">
    <source>
        <dbReference type="UniProtKB" id="Q9RDT3"/>
    </source>
</evidence>
<evidence type="ECO:0000255" key="4"/>
<evidence type="ECO:0000255" key="5">
    <source>
        <dbReference type="PROSITE-ProRule" id="PRU00102"/>
    </source>
</evidence>
<evidence type="ECO:0000255" key="6">
    <source>
        <dbReference type="PROSITE-ProRule" id="PRU00107"/>
    </source>
</evidence>
<evidence type="ECO:0000255" key="7">
    <source>
        <dbReference type="PROSITE-ProRule" id="PRU00140"/>
    </source>
</evidence>
<evidence type="ECO:0000255" key="8">
    <source>
        <dbReference type="PROSITE-ProRule" id="PRU00141"/>
    </source>
</evidence>
<evidence type="ECO:0000305" key="9"/>
<accession>A6QD58</accession>